<reference key="1">
    <citation type="journal article" date="2002" name="Nature">
        <title>The genome sequence of Schizosaccharomyces pombe.</title>
        <authorList>
            <person name="Wood V."/>
            <person name="Gwilliam R."/>
            <person name="Rajandream M.A."/>
            <person name="Lyne M.H."/>
            <person name="Lyne R."/>
            <person name="Stewart A."/>
            <person name="Sgouros J.G."/>
            <person name="Peat N."/>
            <person name="Hayles J."/>
            <person name="Baker S.G."/>
            <person name="Basham D."/>
            <person name="Bowman S."/>
            <person name="Brooks K."/>
            <person name="Brown D."/>
            <person name="Brown S."/>
            <person name="Chillingworth T."/>
            <person name="Churcher C.M."/>
            <person name="Collins M."/>
            <person name="Connor R."/>
            <person name="Cronin A."/>
            <person name="Davis P."/>
            <person name="Feltwell T."/>
            <person name="Fraser A."/>
            <person name="Gentles S."/>
            <person name="Goble A."/>
            <person name="Hamlin N."/>
            <person name="Harris D.E."/>
            <person name="Hidalgo J."/>
            <person name="Hodgson G."/>
            <person name="Holroyd S."/>
            <person name="Hornsby T."/>
            <person name="Howarth S."/>
            <person name="Huckle E.J."/>
            <person name="Hunt S."/>
            <person name="Jagels K."/>
            <person name="James K.D."/>
            <person name="Jones L."/>
            <person name="Jones M."/>
            <person name="Leather S."/>
            <person name="McDonald S."/>
            <person name="McLean J."/>
            <person name="Mooney P."/>
            <person name="Moule S."/>
            <person name="Mungall K.L."/>
            <person name="Murphy L.D."/>
            <person name="Niblett D."/>
            <person name="Odell C."/>
            <person name="Oliver K."/>
            <person name="O'Neil S."/>
            <person name="Pearson D."/>
            <person name="Quail M.A."/>
            <person name="Rabbinowitsch E."/>
            <person name="Rutherford K.M."/>
            <person name="Rutter S."/>
            <person name="Saunders D."/>
            <person name="Seeger K."/>
            <person name="Sharp S."/>
            <person name="Skelton J."/>
            <person name="Simmonds M.N."/>
            <person name="Squares R."/>
            <person name="Squares S."/>
            <person name="Stevens K."/>
            <person name="Taylor K."/>
            <person name="Taylor R.G."/>
            <person name="Tivey A."/>
            <person name="Walsh S.V."/>
            <person name="Warren T."/>
            <person name="Whitehead S."/>
            <person name="Woodward J.R."/>
            <person name="Volckaert G."/>
            <person name="Aert R."/>
            <person name="Robben J."/>
            <person name="Grymonprez B."/>
            <person name="Weltjens I."/>
            <person name="Vanstreels E."/>
            <person name="Rieger M."/>
            <person name="Schaefer M."/>
            <person name="Mueller-Auer S."/>
            <person name="Gabel C."/>
            <person name="Fuchs M."/>
            <person name="Duesterhoeft A."/>
            <person name="Fritzc C."/>
            <person name="Holzer E."/>
            <person name="Moestl D."/>
            <person name="Hilbert H."/>
            <person name="Borzym K."/>
            <person name="Langer I."/>
            <person name="Beck A."/>
            <person name="Lehrach H."/>
            <person name="Reinhardt R."/>
            <person name="Pohl T.M."/>
            <person name="Eger P."/>
            <person name="Zimmermann W."/>
            <person name="Wedler H."/>
            <person name="Wambutt R."/>
            <person name="Purnelle B."/>
            <person name="Goffeau A."/>
            <person name="Cadieu E."/>
            <person name="Dreano S."/>
            <person name="Gloux S."/>
            <person name="Lelaure V."/>
            <person name="Mottier S."/>
            <person name="Galibert F."/>
            <person name="Aves S.J."/>
            <person name="Xiang Z."/>
            <person name="Hunt C."/>
            <person name="Moore K."/>
            <person name="Hurst S.M."/>
            <person name="Lucas M."/>
            <person name="Rochet M."/>
            <person name="Gaillardin C."/>
            <person name="Tallada V.A."/>
            <person name="Garzon A."/>
            <person name="Thode G."/>
            <person name="Daga R.R."/>
            <person name="Cruzado L."/>
            <person name="Jimenez J."/>
            <person name="Sanchez M."/>
            <person name="del Rey F."/>
            <person name="Benito J."/>
            <person name="Dominguez A."/>
            <person name="Revuelta J.L."/>
            <person name="Moreno S."/>
            <person name="Armstrong J."/>
            <person name="Forsburg S.L."/>
            <person name="Cerutti L."/>
            <person name="Lowe T."/>
            <person name="McCombie W.R."/>
            <person name="Paulsen I."/>
            <person name="Potashkin J."/>
            <person name="Shpakovski G.V."/>
            <person name="Ussery D."/>
            <person name="Barrell B.G."/>
            <person name="Nurse P."/>
        </authorList>
    </citation>
    <scope>NUCLEOTIDE SEQUENCE [LARGE SCALE GENOMIC DNA]</scope>
    <source>
        <strain>972 / ATCC 24843</strain>
    </source>
</reference>
<gene>
    <name type="ORF">SPAC328.09</name>
</gene>
<feature type="chain" id="PRO_0000310803" description="Probable mitochondrial 2-oxodicarboxylate carrier">
    <location>
        <begin position="1"/>
        <end position="298"/>
    </location>
</feature>
<feature type="transmembrane region" description="Helical; Name=1" evidence="2">
    <location>
        <begin position="6"/>
        <end position="26"/>
    </location>
</feature>
<feature type="transmembrane region" description="Helical; Name=2" evidence="2">
    <location>
        <begin position="62"/>
        <end position="81"/>
    </location>
</feature>
<feature type="transmembrane region" description="Helical; Name=3" evidence="2">
    <location>
        <begin position="105"/>
        <end position="125"/>
    </location>
</feature>
<feature type="transmembrane region" description="Helical; Name=4" evidence="2">
    <location>
        <begin position="159"/>
        <end position="179"/>
    </location>
</feature>
<feature type="transmembrane region" description="Helical; Name=5" evidence="2">
    <location>
        <begin position="203"/>
        <end position="223"/>
    </location>
</feature>
<feature type="transmembrane region" description="Helical; Name=6" evidence="2">
    <location>
        <begin position="267"/>
        <end position="287"/>
    </location>
</feature>
<feature type="repeat" description="Solcar 1">
    <location>
        <begin position="6"/>
        <end position="92"/>
    </location>
</feature>
<feature type="repeat" description="Solcar 2">
    <location>
        <begin position="102"/>
        <end position="188"/>
    </location>
</feature>
<feature type="repeat" description="Solcar 3">
    <location>
        <begin position="197"/>
        <end position="287"/>
    </location>
</feature>
<name>ODC_SCHPO</name>
<accession>Q9P3T7</accession>
<comment type="function">
    <text evidence="1">Transports C5-C7 oxodicarboxylates across the inner membranes of mitochondria.</text>
</comment>
<comment type="subcellular location">
    <subcellularLocation>
        <location evidence="3">Mitochondrion inner membrane</location>
        <topology evidence="3">Multi-pass membrane protein</topology>
    </subcellularLocation>
</comment>
<comment type="similarity">
    <text evidence="3">Belongs to the mitochondrial carrier (TC 2.A.29) family.</text>
</comment>
<sequence>MPHDNIPFPVTFAAGAVAGISEVLTLYPLDVVKTRMQLSVGKSDYNGTFDCLKKIVKNEGPHRLYRGILPPILMEAPKRALKFASNDTYSKLWRKVFKRKDSSPALSILTGSCAGFTETFVVVPFELMKIRLQDVKNASKYNGTVDCFTKIVKQERILALYNGFEATMWRHVVWNAGYFGVIQKIRNSLTPASSRIGEIRNNLIAGTIGGIFGTFLSTPFDVIKSRIQTVPRIAGQVPKYNWAYPALVTVAREEGFTALYKGFVPKVLRLGPGGGILLVVFNSVIEFYKRCLVHNASA</sequence>
<protein>
    <recommendedName>
        <fullName>Probable mitochondrial 2-oxodicarboxylate carrier</fullName>
    </recommendedName>
</protein>
<evidence type="ECO:0000250" key="1"/>
<evidence type="ECO:0000255" key="2"/>
<evidence type="ECO:0000305" key="3"/>
<proteinExistence type="inferred from homology"/>
<organism>
    <name type="scientific">Schizosaccharomyces pombe (strain 972 / ATCC 24843)</name>
    <name type="common">Fission yeast</name>
    <dbReference type="NCBI Taxonomy" id="284812"/>
    <lineage>
        <taxon>Eukaryota</taxon>
        <taxon>Fungi</taxon>
        <taxon>Dikarya</taxon>
        <taxon>Ascomycota</taxon>
        <taxon>Taphrinomycotina</taxon>
        <taxon>Schizosaccharomycetes</taxon>
        <taxon>Schizosaccharomycetales</taxon>
        <taxon>Schizosaccharomycetaceae</taxon>
        <taxon>Schizosaccharomyces</taxon>
    </lineage>
</organism>
<dbReference type="EMBL" id="CU329670">
    <property type="protein sequence ID" value="CAB96004.1"/>
    <property type="molecule type" value="Genomic_DNA"/>
</dbReference>
<dbReference type="SMR" id="Q9P3T7"/>
<dbReference type="FunCoup" id="Q9P3T7">
    <property type="interactions" value="117"/>
</dbReference>
<dbReference type="iPTMnet" id="Q9P3T7"/>
<dbReference type="PaxDb" id="4896-SPAC328.09.1"/>
<dbReference type="EnsemblFungi" id="SPAC328.09.1">
    <property type="protein sequence ID" value="SPAC328.09.1:pep"/>
    <property type="gene ID" value="SPAC328.09"/>
</dbReference>
<dbReference type="KEGG" id="spo:2543171"/>
<dbReference type="PomBase" id="SPAC328.09"/>
<dbReference type="VEuPathDB" id="FungiDB:SPAC328.09"/>
<dbReference type="eggNOG" id="KOG0754">
    <property type="taxonomic scope" value="Eukaryota"/>
</dbReference>
<dbReference type="HOGENOM" id="CLU_015166_5_2_1"/>
<dbReference type="InParanoid" id="Q9P3T7"/>
<dbReference type="OMA" id="LPFQYQF"/>
<dbReference type="PhylomeDB" id="Q9P3T7"/>
<dbReference type="PRO" id="PR:Q9P3T7"/>
<dbReference type="Proteomes" id="UP000002485">
    <property type="component" value="Chromosome I"/>
</dbReference>
<dbReference type="GO" id="GO:0005743">
    <property type="term" value="C:mitochondrial inner membrane"/>
    <property type="evidence" value="ECO:0000250"/>
    <property type="project" value="PomBase"/>
</dbReference>
<dbReference type="GO" id="GO:0015139">
    <property type="term" value="F:alpha-ketoglutarate transmembrane transporter activity"/>
    <property type="evidence" value="ECO:0000250"/>
    <property type="project" value="PomBase"/>
</dbReference>
<dbReference type="GO" id="GO:0015183">
    <property type="term" value="F:L-aspartate transmembrane transporter activity"/>
    <property type="evidence" value="ECO:0000318"/>
    <property type="project" value="GO_Central"/>
</dbReference>
<dbReference type="GO" id="GO:0005313">
    <property type="term" value="F:L-glutamate transmembrane transporter activity"/>
    <property type="evidence" value="ECO:0000318"/>
    <property type="project" value="GO_Central"/>
</dbReference>
<dbReference type="GO" id="GO:0015810">
    <property type="term" value="P:aspartate transmembrane transport"/>
    <property type="evidence" value="ECO:0000318"/>
    <property type="project" value="GO_Central"/>
</dbReference>
<dbReference type="GO" id="GO:0015813">
    <property type="term" value="P:L-glutamate transmembrane transport"/>
    <property type="evidence" value="ECO:0000318"/>
    <property type="project" value="GO_Central"/>
</dbReference>
<dbReference type="GO" id="GO:0043490">
    <property type="term" value="P:malate-aspartate shuttle"/>
    <property type="evidence" value="ECO:0000318"/>
    <property type="project" value="GO_Central"/>
</dbReference>
<dbReference type="GO" id="GO:1990551">
    <property type="term" value="P:mitochondrial 2-oxoadipate transmembrane transport"/>
    <property type="evidence" value="ECO:0000250"/>
    <property type="project" value="PomBase"/>
</dbReference>
<dbReference type="GO" id="GO:1990550">
    <property type="term" value="P:mitochondrial alpha-ketoglutarate transmembrane transport"/>
    <property type="evidence" value="ECO:0000250"/>
    <property type="project" value="PomBase"/>
</dbReference>
<dbReference type="Gene3D" id="1.50.40.10">
    <property type="entry name" value="Mitochondrial carrier domain"/>
    <property type="match status" value="1"/>
</dbReference>
<dbReference type="InterPro" id="IPR002067">
    <property type="entry name" value="Mit_carrier"/>
</dbReference>
<dbReference type="InterPro" id="IPR051752">
    <property type="entry name" value="Mito_2-oxodicarb_carrier"/>
</dbReference>
<dbReference type="InterPro" id="IPR018108">
    <property type="entry name" value="Mitochondrial_sb/sol_carrier"/>
</dbReference>
<dbReference type="InterPro" id="IPR023395">
    <property type="entry name" value="Mt_carrier_dom_sf"/>
</dbReference>
<dbReference type="PANTHER" id="PTHR46356">
    <property type="entry name" value="MITOCHONDRIAL 2-OXODICARBOXYLATE CARRIER"/>
    <property type="match status" value="1"/>
</dbReference>
<dbReference type="PANTHER" id="PTHR46356:SF1">
    <property type="entry name" value="MITOCHONDRIAL 2-OXODICARBOXYLATE CARRIER"/>
    <property type="match status" value="1"/>
</dbReference>
<dbReference type="Pfam" id="PF00153">
    <property type="entry name" value="Mito_carr"/>
    <property type="match status" value="3"/>
</dbReference>
<dbReference type="PRINTS" id="PR00926">
    <property type="entry name" value="MITOCARRIER"/>
</dbReference>
<dbReference type="SUPFAM" id="SSF103506">
    <property type="entry name" value="Mitochondrial carrier"/>
    <property type="match status" value="1"/>
</dbReference>
<dbReference type="PROSITE" id="PS50920">
    <property type="entry name" value="SOLCAR"/>
    <property type="match status" value="3"/>
</dbReference>
<keyword id="KW-0472">Membrane</keyword>
<keyword id="KW-0496">Mitochondrion</keyword>
<keyword id="KW-0999">Mitochondrion inner membrane</keyword>
<keyword id="KW-1185">Reference proteome</keyword>
<keyword id="KW-0677">Repeat</keyword>
<keyword id="KW-0812">Transmembrane</keyword>
<keyword id="KW-1133">Transmembrane helix</keyword>
<keyword id="KW-0813">Transport</keyword>